<feature type="chain" id="PRO_0000329587" description="Polyribonucleotide nucleotidyltransferase">
    <location>
        <begin position="1"/>
        <end position="733"/>
    </location>
</feature>
<feature type="domain" description="KH" evidence="1">
    <location>
        <begin position="570"/>
        <end position="629"/>
    </location>
</feature>
<feature type="domain" description="S1 motif" evidence="1">
    <location>
        <begin position="639"/>
        <end position="713"/>
    </location>
</feature>
<feature type="binding site" evidence="1">
    <location>
        <position position="503"/>
    </location>
    <ligand>
        <name>Mg(2+)</name>
        <dbReference type="ChEBI" id="CHEBI:18420"/>
    </ligand>
</feature>
<feature type="binding site" evidence="1">
    <location>
        <position position="509"/>
    </location>
    <ligand>
        <name>Mg(2+)</name>
        <dbReference type="ChEBI" id="CHEBI:18420"/>
    </ligand>
</feature>
<comment type="function">
    <text evidence="1">Involved in mRNA degradation. Catalyzes the phosphorolysis of single-stranded polyribonucleotides processively in the 3'- to 5'-direction.</text>
</comment>
<comment type="catalytic activity">
    <reaction evidence="1">
        <text>RNA(n+1) + phosphate = RNA(n) + a ribonucleoside 5'-diphosphate</text>
        <dbReference type="Rhea" id="RHEA:22096"/>
        <dbReference type="Rhea" id="RHEA-COMP:14527"/>
        <dbReference type="Rhea" id="RHEA-COMP:17342"/>
        <dbReference type="ChEBI" id="CHEBI:43474"/>
        <dbReference type="ChEBI" id="CHEBI:57930"/>
        <dbReference type="ChEBI" id="CHEBI:140395"/>
        <dbReference type="EC" id="2.7.7.8"/>
    </reaction>
</comment>
<comment type="cofactor">
    <cofactor evidence="1">
        <name>Mg(2+)</name>
        <dbReference type="ChEBI" id="CHEBI:18420"/>
    </cofactor>
</comment>
<comment type="subcellular location">
    <subcellularLocation>
        <location evidence="1">Cytoplasm</location>
    </subcellularLocation>
</comment>
<comment type="similarity">
    <text evidence="1">Belongs to the polyribonucleotide nucleotidyltransferase family.</text>
</comment>
<protein>
    <recommendedName>
        <fullName evidence="1">Polyribonucleotide nucleotidyltransferase</fullName>
        <ecNumber evidence="1">2.7.7.8</ecNumber>
    </recommendedName>
    <alternativeName>
        <fullName evidence="1">Polynucleotide phosphorylase</fullName>
        <shortName evidence="1">PNPase</shortName>
    </alternativeName>
</protein>
<sequence>MFIKKKIDLGHGKVITIETGKMAKQADGSAVVTMNDTMVLATVVSSKTPPSPNQDFFPLQVEYREKYSAAGKFPGGFFKREGRPSEKEILSARLIDRALRPLFPDGYYQETQIIISVISSDTINDADVLGGIAASAAIMVSDIPFANPMSEVRVGRINGLFIVNPDINELAQSDMDICIGGTEDTICMLEGEMKEISEAEMLDAIKFGHDAIKKICALQRELAAEVAKPKRPFSPTVAPDELVNFVEEHCSAELKALAYTPLAKEERAEKTKAIYTQTIRKTLTHFTDRVGPDQIEADPTSAFCLNEHMIEECIHAVEKKVMRHMILDDGKRLDGRTLEQVRPISIELGLIPRAHGSALFTRGETQALVTLTLGTKKDAQSVDTLTDDKDKRFMLHYNFPPFSVGEIGRVGGAGRREIGHGNLAERAIKMVMPSEQEFPYTVRLVSDILESNGSSSMASVCGGTLAAMDGGIPLKKPVSGIAMGLIKEGDRYAVLSDILGNEDHLGDMDFKVAGTRDGITACQMDIKIDGLDYHILETALEQARKGRLHILDVMAEAIPESRADIGKYAPRLTTIQIPVDAIGMVIGKGGETIRSITEETGAEINIDDDGTVTIACSSPEATKAAVETIKTLVSKPEVGTIYMGKVRDIRDELGAFVEFLPKTDGLVHISEIARERIAKVSDVLKVGDRIKVKLIDVRKDPRTGKTKFALSIKALLDTDQQAETNGEAKPARD</sequence>
<name>PNP_CHLTE</name>
<dbReference type="EC" id="2.7.7.8" evidence="1"/>
<dbReference type="EMBL" id="AE006470">
    <property type="protein sequence ID" value="AAM72874.1"/>
    <property type="molecule type" value="Genomic_DNA"/>
</dbReference>
<dbReference type="RefSeq" id="NP_662532.1">
    <property type="nucleotide sequence ID" value="NC_002932.3"/>
</dbReference>
<dbReference type="RefSeq" id="WP_010933313.1">
    <property type="nucleotide sequence ID" value="NC_002932.3"/>
</dbReference>
<dbReference type="SMR" id="Q8KBY3"/>
<dbReference type="STRING" id="194439.CT1649"/>
<dbReference type="EnsemblBacteria" id="AAM72874">
    <property type="protein sequence ID" value="AAM72874"/>
    <property type="gene ID" value="CT1649"/>
</dbReference>
<dbReference type="KEGG" id="cte:CT1649"/>
<dbReference type="PATRIC" id="fig|194439.7.peg.1491"/>
<dbReference type="eggNOG" id="COG1185">
    <property type="taxonomic scope" value="Bacteria"/>
</dbReference>
<dbReference type="HOGENOM" id="CLU_004217_2_2_10"/>
<dbReference type="OrthoDB" id="9804305at2"/>
<dbReference type="Proteomes" id="UP000001007">
    <property type="component" value="Chromosome"/>
</dbReference>
<dbReference type="GO" id="GO:0005829">
    <property type="term" value="C:cytosol"/>
    <property type="evidence" value="ECO:0007669"/>
    <property type="project" value="TreeGrafter"/>
</dbReference>
<dbReference type="GO" id="GO:0000175">
    <property type="term" value="F:3'-5'-RNA exonuclease activity"/>
    <property type="evidence" value="ECO:0007669"/>
    <property type="project" value="TreeGrafter"/>
</dbReference>
<dbReference type="GO" id="GO:0000287">
    <property type="term" value="F:magnesium ion binding"/>
    <property type="evidence" value="ECO:0007669"/>
    <property type="project" value="UniProtKB-UniRule"/>
</dbReference>
<dbReference type="GO" id="GO:0004654">
    <property type="term" value="F:polyribonucleotide nucleotidyltransferase activity"/>
    <property type="evidence" value="ECO:0007669"/>
    <property type="project" value="UniProtKB-UniRule"/>
</dbReference>
<dbReference type="GO" id="GO:0003723">
    <property type="term" value="F:RNA binding"/>
    <property type="evidence" value="ECO:0007669"/>
    <property type="project" value="UniProtKB-UniRule"/>
</dbReference>
<dbReference type="GO" id="GO:0006402">
    <property type="term" value="P:mRNA catabolic process"/>
    <property type="evidence" value="ECO:0007669"/>
    <property type="project" value="UniProtKB-UniRule"/>
</dbReference>
<dbReference type="GO" id="GO:0006396">
    <property type="term" value="P:RNA processing"/>
    <property type="evidence" value="ECO:0007669"/>
    <property type="project" value="InterPro"/>
</dbReference>
<dbReference type="CDD" id="cd02393">
    <property type="entry name" value="KH-I_PNPase"/>
    <property type="match status" value="1"/>
</dbReference>
<dbReference type="CDD" id="cd11363">
    <property type="entry name" value="RNase_PH_PNPase_1"/>
    <property type="match status" value="1"/>
</dbReference>
<dbReference type="CDD" id="cd11364">
    <property type="entry name" value="RNase_PH_PNPase_2"/>
    <property type="match status" value="1"/>
</dbReference>
<dbReference type="CDD" id="cd04472">
    <property type="entry name" value="S1_PNPase"/>
    <property type="match status" value="1"/>
</dbReference>
<dbReference type="FunFam" id="3.30.1370.10:FF:000001">
    <property type="entry name" value="Polyribonucleotide nucleotidyltransferase"/>
    <property type="match status" value="1"/>
</dbReference>
<dbReference type="FunFam" id="3.30.230.70:FF:000001">
    <property type="entry name" value="Polyribonucleotide nucleotidyltransferase"/>
    <property type="match status" value="1"/>
</dbReference>
<dbReference type="FunFam" id="3.30.230.70:FF:000002">
    <property type="entry name" value="Polyribonucleotide nucleotidyltransferase"/>
    <property type="match status" value="1"/>
</dbReference>
<dbReference type="Gene3D" id="3.30.230.70">
    <property type="entry name" value="GHMP Kinase, N-terminal domain"/>
    <property type="match status" value="2"/>
</dbReference>
<dbReference type="Gene3D" id="3.30.1370.10">
    <property type="entry name" value="K Homology domain, type 1"/>
    <property type="match status" value="1"/>
</dbReference>
<dbReference type="Gene3D" id="2.40.50.140">
    <property type="entry name" value="Nucleic acid-binding proteins"/>
    <property type="match status" value="1"/>
</dbReference>
<dbReference type="HAMAP" id="MF_01595">
    <property type="entry name" value="PNPase"/>
    <property type="match status" value="1"/>
</dbReference>
<dbReference type="InterPro" id="IPR001247">
    <property type="entry name" value="ExoRNase_PH_dom1"/>
</dbReference>
<dbReference type="InterPro" id="IPR015847">
    <property type="entry name" value="ExoRNase_PH_dom2"/>
</dbReference>
<dbReference type="InterPro" id="IPR036345">
    <property type="entry name" value="ExoRNase_PH_dom2_sf"/>
</dbReference>
<dbReference type="InterPro" id="IPR004087">
    <property type="entry name" value="KH_dom"/>
</dbReference>
<dbReference type="InterPro" id="IPR004088">
    <property type="entry name" value="KH_dom_type_1"/>
</dbReference>
<dbReference type="InterPro" id="IPR036612">
    <property type="entry name" value="KH_dom_type_1_sf"/>
</dbReference>
<dbReference type="InterPro" id="IPR012340">
    <property type="entry name" value="NA-bd_OB-fold"/>
</dbReference>
<dbReference type="InterPro" id="IPR012162">
    <property type="entry name" value="PNPase"/>
</dbReference>
<dbReference type="InterPro" id="IPR027408">
    <property type="entry name" value="PNPase/RNase_PH_dom_sf"/>
</dbReference>
<dbReference type="InterPro" id="IPR015848">
    <property type="entry name" value="PNPase_PH_RNA-bd_bac/org-type"/>
</dbReference>
<dbReference type="InterPro" id="IPR020568">
    <property type="entry name" value="Ribosomal_Su5_D2-typ_SF"/>
</dbReference>
<dbReference type="InterPro" id="IPR003029">
    <property type="entry name" value="S1_domain"/>
</dbReference>
<dbReference type="NCBIfam" id="TIGR03591">
    <property type="entry name" value="polynuc_phos"/>
    <property type="match status" value="1"/>
</dbReference>
<dbReference type="NCBIfam" id="NF008805">
    <property type="entry name" value="PRK11824.1"/>
    <property type="match status" value="1"/>
</dbReference>
<dbReference type="PANTHER" id="PTHR11252">
    <property type="entry name" value="POLYRIBONUCLEOTIDE NUCLEOTIDYLTRANSFERASE"/>
    <property type="match status" value="1"/>
</dbReference>
<dbReference type="PANTHER" id="PTHR11252:SF0">
    <property type="entry name" value="POLYRIBONUCLEOTIDE NUCLEOTIDYLTRANSFERASE 1, MITOCHONDRIAL"/>
    <property type="match status" value="1"/>
</dbReference>
<dbReference type="Pfam" id="PF00013">
    <property type="entry name" value="KH_1"/>
    <property type="match status" value="1"/>
</dbReference>
<dbReference type="Pfam" id="PF03726">
    <property type="entry name" value="PNPase"/>
    <property type="match status" value="1"/>
</dbReference>
<dbReference type="Pfam" id="PF01138">
    <property type="entry name" value="RNase_PH"/>
    <property type="match status" value="2"/>
</dbReference>
<dbReference type="Pfam" id="PF03725">
    <property type="entry name" value="RNase_PH_C"/>
    <property type="match status" value="2"/>
</dbReference>
<dbReference type="Pfam" id="PF00575">
    <property type="entry name" value="S1"/>
    <property type="match status" value="1"/>
</dbReference>
<dbReference type="PIRSF" id="PIRSF005499">
    <property type="entry name" value="PNPase"/>
    <property type="match status" value="1"/>
</dbReference>
<dbReference type="SMART" id="SM00322">
    <property type="entry name" value="KH"/>
    <property type="match status" value="1"/>
</dbReference>
<dbReference type="SMART" id="SM00316">
    <property type="entry name" value="S1"/>
    <property type="match status" value="1"/>
</dbReference>
<dbReference type="SUPFAM" id="SSF54791">
    <property type="entry name" value="Eukaryotic type KH-domain (KH-domain type I)"/>
    <property type="match status" value="1"/>
</dbReference>
<dbReference type="SUPFAM" id="SSF50249">
    <property type="entry name" value="Nucleic acid-binding proteins"/>
    <property type="match status" value="1"/>
</dbReference>
<dbReference type="SUPFAM" id="SSF55666">
    <property type="entry name" value="Ribonuclease PH domain 2-like"/>
    <property type="match status" value="2"/>
</dbReference>
<dbReference type="SUPFAM" id="SSF54211">
    <property type="entry name" value="Ribosomal protein S5 domain 2-like"/>
    <property type="match status" value="2"/>
</dbReference>
<dbReference type="PROSITE" id="PS50084">
    <property type="entry name" value="KH_TYPE_1"/>
    <property type="match status" value="1"/>
</dbReference>
<dbReference type="PROSITE" id="PS50126">
    <property type="entry name" value="S1"/>
    <property type="match status" value="1"/>
</dbReference>
<proteinExistence type="inferred from homology"/>
<reference key="1">
    <citation type="journal article" date="2002" name="Proc. Natl. Acad. Sci. U.S.A.">
        <title>The complete genome sequence of Chlorobium tepidum TLS, a photosynthetic, anaerobic, green-sulfur bacterium.</title>
        <authorList>
            <person name="Eisen J.A."/>
            <person name="Nelson K.E."/>
            <person name="Paulsen I.T."/>
            <person name="Heidelberg J.F."/>
            <person name="Wu M."/>
            <person name="Dodson R.J."/>
            <person name="DeBoy R.T."/>
            <person name="Gwinn M.L."/>
            <person name="Nelson W.C."/>
            <person name="Haft D.H."/>
            <person name="Hickey E.K."/>
            <person name="Peterson J.D."/>
            <person name="Durkin A.S."/>
            <person name="Kolonay J.F."/>
            <person name="Yang F."/>
            <person name="Holt I.E."/>
            <person name="Umayam L.A."/>
            <person name="Mason T.M."/>
            <person name="Brenner M."/>
            <person name="Shea T.P."/>
            <person name="Parksey D.S."/>
            <person name="Nierman W.C."/>
            <person name="Feldblyum T.V."/>
            <person name="Hansen C.L."/>
            <person name="Craven M.B."/>
            <person name="Radune D."/>
            <person name="Vamathevan J.J."/>
            <person name="Khouri H.M."/>
            <person name="White O."/>
            <person name="Gruber T.M."/>
            <person name="Ketchum K.A."/>
            <person name="Venter J.C."/>
            <person name="Tettelin H."/>
            <person name="Bryant D.A."/>
            <person name="Fraser C.M."/>
        </authorList>
    </citation>
    <scope>NUCLEOTIDE SEQUENCE [LARGE SCALE GENOMIC DNA]</scope>
    <source>
        <strain>ATCC 49652 / DSM 12025 / NBRC 103806 / TLS</strain>
    </source>
</reference>
<keyword id="KW-0963">Cytoplasm</keyword>
<keyword id="KW-0460">Magnesium</keyword>
<keyword id="KW-0479">Metal-binding</keyword>
<keyword id="KW-0548">Nucleotidyltransferase</keyword>
<keyword id="KW-1185">Reference proteome</keyword>
<keyword id="KW-0694">RNA-binding</keyword>
<keyword id="KW-0808">Transferase</keyword>
<organism>
    <name type="scientific">Chlorobaculum tepidum (strain ATCC 49652 / DSM 12025 / NBRC 103806 / TLS)</name>
    <name type="common">Chlorobium tepidum</name>
    <dbReference type="NCBI Taxonomy" id="194439"/>
    <lineage>
        <taxon>Bacteria</taxon>
        <taxon>Pseudomonadati</taxon>
        <taxon>Chlorobiota</taxon>
        <taxon>Chlorobiia</taxon>
        <taxon>Chlorobiales</taxon>
        <taxon>Chlorobiaceae</taxon>
        <taxon>Chlorobaculum</taxon>
    </lineage>
</organism>
<evidence type="ECO:0000255" key="1">
    <source>
        <dbReference type="HAMAP-Rule" id="MF_01595"/>
    </source>
</evidence>
<gene>
    <name evidence="1" type="primary">pnp</name>
    <name type="ordered locus">CT1649</name>
</gene>
<accession>Q8KBY3</accession>